<proteinExistence type="inferred from homology"/>
<organism>
    <name type="scientific">Marinomonas sp. (strain MWYL1)</name>
    <dbReference type="NCBI Taxonomy" id="400668"/>
    <lineage>
        <taxon>Bacteria</taxon>
        <taxon>Pseudomonadati</taxon>
        <taxon>Pseudomonadota</taxon>
        <taxon>Gammaproteobacteria</taxon>
        <taxon>Oceanospirillales</taxon>
        <taxon>Oceanospirillaceae</taxon>
        <taxon>Marinomonas</taxon>
    </lineage>
</organism>
<protein>
    <recommendedName>
        <fullName evidence="1">GTPase Obg</fullName>
        <ecNumber evidence="1">3.6.5.-</ecNumber>
    </recommendedName>
    <alternativeName>
        <fullName evidence="1">GTP-binding protein Obg</fullName>
    </alternativeName>
</protein>
<feature type="chain" id="PRO_0000386033" description="GTPase Obg">
    <location>
        <begin position="1"/>
        <end position="396"/>
    </location>
</feature>
<feature type="domain" description="Obg" evidence="2">
    <location>
        <begin position="1"/>
        <end position="159"/>
    </location>
</feature>
<feature type="domain" description="OBG-type G" evidence="1">
    <location>
        <begin position="160"/>
        <end position="333"/>
    </location>
</feature>
<feature type="region of interest" description="Disordered" evidence="3">
    <location>
        <begin position="120"/>
        <end position="146"/>
    </location>
</feature>
<feature type="compositionally biased region" description="Polar residues" evidence="3">
    <location>
        <begin position="129"/>
        <end position="144"/>
    </location>
</feature>
<feature type="binding site" evidence="1">
    <location>
        <begin position="166"/>
        <end position="173"/>
    </location>
    <ligand>
        <name>GTP</name>
        <dbReference type="ChEBI" id="CHEBI:37565"/>
    </ligand>
</feature>
<feature type="binding site" evidence="1">
    <location>
        <position position="173"/>
    </location>
    <ligand>
        <name>Mg(2+)</name>
        <dbReference type="ChEBI" id="CHEBI:18420"/>
    </ligand>
</feature>
<feature type="binding site" evidence="1">
    <location>
        <begin position="191"/>
        <end position="195"/>
    </location>
    <ligand>
        <name>GTP</name>
        <dbReference type="ChEBI" id="CHEBI:37565"/>
    </ligand>
</feature>
<feature type="binding site" evidence="1">
    <location>
        <position position="193"/>
    </location>
    <ligand>
        <name>Mg(2+)</name>
        <dbReference type="ChEBI" id="CHEBI:18420"/>
    </ligand>
</feature>
<feature type="binding site" evidence="1">
    <location>
        <begin position="213"/>
        <end position="216"/>
    </location>
    <ligand>
        <name>GTP</name>
        <dbReference type="ChEBI" id="CHEBI:37565"/>
    </ligand>
</feature>
<feature type="binding site" evidence="1">
    <location>
        <begin position="283"/>
        <end position="286"/>
    </location>
    <ligand>
        <name>GTP</name>
        <dbReference type="ChEBI" id="CHEBI:37565"/>
    </ligand>
</feature>
<feature type="binding site" evidence="1">
    <location>
        <begin position="314"/>
        <end position="316"/>
    </location>
    <ligand>
        <name>GTP</name>
        <dbReference type="ChEBI" id="CHEBI:37565"/>
    </ligand>
</feature>
<comment type="function">
    <text evidence="1">An essential GTPase which binds GTP, GDP and possibly (p)ppGpp with moderate affinity, with high nucleotide exchange rates and a fairly low GTP hydrolysis rate. Plays a role in control of the cell cycle, stress response, ribosome biogenesis and in those bacteria that undergo differentiation, in morphogenesis control.</text>
</comment>
<comment type="cofactor">
    <cofactor evidence="1">
        <name>Mg(2+)</name>
        <dbReference type="ChEBI" id="CHEBI:18420"/>
    </cofactor>
</comment>
<comment type="subunit">
    <text evidence="1">Monomer.</text>
</comment>
<comment type="subcellular location">
    <subcellularLocation>
        <location evidence="1">Cytoplasm</location>
    </subcellularLocation>
</comment>
<comment type="similarity">
    <text evidence="1">Belongs to the TRAFAC class OBG-HflX-like GTPase superfamily. OBG GTPase family.</text>
</comment>
<sequence>MKFVDEASIYVRAGKGGNGALSFWREKFVAKGGPDGGDGGNGGSVVLVADEALNTLIDFRFTKKYIAESGEGGQGRDMTGSKGADLEIKVPVGTTVIDEDTGETLGDLVRDGQKLKVAQGGHHGLGNTRFKSSTNRAPRQTTKGTVGEERTLKLEMKVLADVGLLGLPNAGKSTFIRAVSSAKPKVADYPFTTLVPNLGVVKVKKHQSFVIADIPGIIEGASEGAGLGIRFLKHLVRNRILLHIVDLAPWDEITPAEAAVIAVNELHQFSPALAERERWLVLNKTDMVPEDELEERCQSVIDALGWEGKAYRISAISGEGTEVLCLDLMTALDEKRELLLESPEAREKEKAVRALIDEEGRNRIMSLREKRRKAGLLLDDDDFDEDDYDVEVEYVS</sequence>
<keyword id="KW-0963">Cytoplasm</keyword>
<keyword id="KW-0342">GTP-binding</keyword>
<keyword id="KW-0378">Hydrolase</keyword>
<keyword id="KW-0460">Magnesium</keyword>
<keyword id="KW-0479">Metal-binding</keyword>
<keyword id="KW-0547">Nucleotide-binding</keyword>
<dbReference type="EC" id="3.6.5.-" evidence="1"/>
<dbReference type="EMBL" id="CP000749">
    <property type="protein sequence ID" value="ABR73131.1"/>
    <property type="molecule type" value="Genomic_DNA"/>
</dbReference>
<dbReference type="SMR" id="A6W352"/>
<dbReference type="STRING" id="400668.Mmwyl1_4236"/>
<dbReference type="KEGG" id="mmw:Mmwyl1_4236"/>
<dbReference type="eggNOG" id="COG0536">
    <property type="taxonomic scope" value="Bacteria"/>
</dbReference>
<dbReference type="HOGENOM" id="CLU_011747_2_0_6"/>
<dbReference type="OrthoDB" id="9807318at2"/>
<dbReference type="GO" id="GO:0005737">
    <property type="term" value="C:cytoplasm"/>
    <property type="evidence" value="ECO:0007669"/>
    <property type="project" value="UniProtKB-SubCell"/>
</dbReference>
<dbReference type="GO" id="GO:0005525">
    <property type="term" value="F:GTP binding"/>
    <property type="evidence" value="ECO:0007669"/>
    <property type="project" value="UniProtKB-UniRule"/>
</dbReference>
<dbReference type="GO" id="GO:0003924">
    <property type="term" value="F:GTPase activity"/>
    <property type="evidence" value="ECO:0007669"/>
    <property type="project" value="UniProtKB-UniRule"/>
</dbReference>
<dbReference type="GO" id="GO:0000287">
    <property type="term" value="F:magnesium ion binding"/>
    <property type="evidence" value="ECO:0007669"/>
    <property type="project" value="InterPro"/>
</dbReference>
<dbReference type="GO" id="GO:0042254">
    <property type="term" value="P:ribosome biogenesis"/>
    <property type="evidence" value="ECO:0007669"/>
    <property type="project" value="UniProtKB-UniRule"/>
</dbReference>
<dbReference type="CDD" id="cd01898">
    <property type="entry name" value="Obg"/>
    <property type="match status" value="1"/>
</dbReference>
<dbReference type="FunFam" id="2.70.210.12:FF:000001">
    <property type="entry name" value="GTPase Obg"/>
    <property type="match status" value="1"/>
</dbReference>
<dbReference type="Gene3D" id="2.70.210.12">
    <property type="entry name" value="GTP1/OBG domain"/>
    <property type="match status" value="1"/>
</dbReference>
<dbReference type="Gene3D" id="3.40.50.300">
    <property type="entry name" value="P-loop containing nucleotide triphosphate hydrolases"/>
    <property type="match status" value="1"/>
</dbReference>
<dbReference type="HAMAP" id="MF_01454">
    <property type="entry name" value="GTPase_Obg"/>
    <property type="match status" value="1"/>
</dbReference>
<dbReference type="InterPro" id="IPR031167">
    <property type="entry name" value="G_OBG"/>
</dbReference>
<dbReference type="InterPro" id="IPR006073">
    <property type="entry name" value="GTP-bd"/>
</dbReference>
<dbReference type="InterPro" id="IPR014100">
    <property type="entry name" value="GTP-bd_Obg/CgtA"/>
</dbReference>
<dbReference type="InterPro" id="IPR006074">
    <property type="entry name" value="GTP1-OBG_CS"/>
</dbReference>
<dbReference type="InterPro" id="IPR006169">
    <property type="entry name" value="GTP1_OBG_dom"/>
</dbReference>
<dbReference type="InterPro" id="IPR036726">
    <property type="entry name" value="GTP1_OBG_dom_sf"/>
</dbReference>
<dbReference type="InterPro" id="IPR045086">
    <property type="entry name" value="OBG_GTPase"/>
</dbReference>
<dbReference type="InterPro" id="IPR027417">
    <property type="entry name" value="P-loop_NTPase"/>
</dbReference>
<dbReference type="NCBIfam" id="TIGR02729">
    <property type="entry name" value="Obg_CgtA"/>
    <property type="match status" value="1"/>
</dbReference>
<dbReference type="NCBIfam" id="NF008955">
    <property type="entry name" value="PRK12297.1"/>
    <property type="match status" value="1"/>
</dbReference>
<dbReference type="NCBIfam" id="NF008956">
    <property type="entry name" value="PRK12299.1"/>
    <property type="match status" value="1"/>
</dbReference>
<dbReference type="PANTHER" id="PTHR11702">
    <property type="entry name" value="DEVELOPMENTALLY REGULATED GTP-BINDING PROTEIN-RELATED"/>
    <property type="match status" value="1"/>
</dbReference>
<dbReference type="PANTHER" id="PTHR11702:SF31">
    <property type="entry name" value="MITOCHONDRIAL RIBOSOME-ASSOCIATED GTPASE 2"/>
    <property type="match status" value="1"/>
</dbReference>
<dbReference type="Pfam" id="PF01018">
    <property type="entry name" value="GTP1_OBG"/>
    <property type="match status" value="1"/>
</dbReference>
<dbReference type="Pfam" id="PF01926">
    <property type="entry name" value="MMR_HSR1"/>
    <property type="match status" value="1"/>
</dbReference>
<dbReference type="PIRSF" id="PIRSF002401">
    <property type="entry name" value="GTP_bd_Obg/CgtA"/>
    <property type="match status" value="1"/>
</dbReference>
<dbReference type="PRINTS" id="PR00326">
    <property type="entry name" value="GTP1OBG"/>
</dbReference>
<dbReference type="SUPFAM" id="SSF82051">
    <property type="entry name" value="Obg GTP-binding protein N-terminal domain"/>
    <property type="match status" value="1"/>
</dbReference>
<dbReference type="SUPFAM" id="SSF52540">
    <property type="entry name" value="P-loop containing nucleoside triphosphate hydrolases"/>
    <property type="match status" value="1"/>
</dbReference>
<dbReference type="PROSITE" id="PS51710">
    <property type="entry name" value="G_OBG"/>
    <property type="match status" value="1"/>
</dbReference>
<dbReference type="PROSITE" id="PS00905">
    <property type="entry name" value="GTP1_OBG"/>
    <property type="match status" value="1"/>
</dbReference>
<dbReference type="PROSITE" id="PS51883">
    <property type="entry name" value="OBG"/>
    <property type="match status" value="1"/>
</dbReference>
<gene>
    <name evidence="1" type="primary">obg</name>
    <name type="ordered locus">Mmwyl1_4236</name>
</gene>
<accession>A6W352</accession>
<reference key="1">
    <citation type="submission" date="2007-06" db="EMBL/GenBank/DDBJ databases">
        <title>Complete sequence of Marinomonas sp. MWYL1.</title>
        <authorList>
            <consortium name="US DOE Joint Genome Institute"/>
            <person name="Copeland A."/>
            <person name="Lucas S."/>
            <person name="Lapidus A."/>
            <person name="Barry K."/>
            <person name="Glavina del Rio T."/>
            <person name="Dalin E."/>
            <person name="Tice H."/>
            <person name="Pitluck S."/>
            <person name="Kiss H."/>
            <person name="Brettin T."/>
            <person name="Bruce D."/>
            <person name="Detter J.C."/>
            <person name="Han C."/>
            <person name="Schmutz J."/>
            <person name="Larimer F."/>
            <person name="Land M."/>
            <person name="Hauser L."/>
            <person name="Kyrpides N."/>
            <person name="Kim E."/>
            <person name="Johnston A.W.B."/>
            <person name="Todd J.D."/>
            <person name="Rogers R."/>
            <person name="Wexler M."/>
            <person name="Bond P.L."/>
            <person name="Li Y."/>
            <person name="Richardson P."/>
        </authorList>
    </citation>
    <scope>NUCLEOTIDE SEQUENCE [LARGE SCALE GENOMIC DNA]</scope>
    <source>
        <strain>MWYL1</strain>
    </source>
</reference>
<name>OBG_MARMS</name>
<evidence type="ECO:0000255" key="1">
    <source>
        <dbReference type="HAMAP-Rule" id="MF_01454"/>
    </source>
</evidence>
<evidence type="ECO:0000255" key="2">
    <source>
        <dbReference type="PROSITE-ProRule" id="PRU01231"/>
    </source>
</evidence>
<evidence type="ECO:0000256" key="3">
    <source>
        <dbReference type="SAM" id="MobiDB-lite"/>
    </source>
</evidence>